<reference key="1">
    <citation type="journal article" date="2011" name="J. Bacteriol.">
        <title>Complete genome sequence of the metabolically versatile plant growth-promoting endophyte, Variovorax paradoxus S110.</title>
        <authorList>
            <person name="Han J.I."/>
            <person name="Choi H.K."/>
            <person name="Lee S.W."/>
            <person name="Orwin P.M."/>
            <person name="Kim J."/>
            <person name="Laroe S.L."/>
            <person name="Kim T.G."/>
            <person name="O'Neil J."/>
            <person name="Leadbetter J.R."/>
            <person name="Lee S.Y."/>
            <person name="Hur C.G."/>
            <person name="Spain J.C."/>
            <person name="Ovchinnikova G."/>
            <person name="Goodwin L."/>
            <person name="Han C."/>
        </authorList>
    </citation>
    <scope>NUCLEOTIDE SEQUENCE [LARGE SCALE GENOMIC DNA]</scope>
    <source>
        <strain>S110</strain>
    </source>
</reference>
<feature type="chain" id="PRO_1000213501" description="Ribosome maturation factor RimP">
    <location>
        <begin position="1"/>
        <end position="212"/>
    </location>
</feature>
<name>RIMP_VARPS</name>
<protein>
    <recommendedName>
        <fullName evidence="1">Ribosome maturation factor RimP</fullName>
    </recommendedName>
</protein>
<organism>
    <name type="scientific">Variovorax paradoxus (strain S110)</name>
    <dbReference type="NCBI Taxonomy" id="543728"/>
    <lineage>
        <taxon>Bacteria</taxon>
        <taxon>Pseudomonadati</taxon>
        <taxon>Pseudomonadota</taxon>
        <taxon>Betaproteobacteria</taxon>
        <taxon>Burkholderiales</taxon>
        <taxon>Comamonadaceae</taxon>
        <taxon>Variovorax</taxon>
    </lineage>
</organism>
<keyword id="KW-0963">Cytoplasm</keyword>
<keyword id="KW-0690">Ribosome biogenesis</keyword>
<comment type="function">
    <text evidence="1">Required for maturation of 30S ribosomal subunits.</text>
</comment>
<comment type="subcellular location">
    <subcellularLocation>
        <location evidence="1">Cytoplasm</location>
    </subcellularLocation>
</comment>
<comment type="similarity">
    <text evidence="1">Belongs to the RimP family.</text>
</comment>
<dbReference type="EMBL" id="CP001635">
    <property type="protein sequence ID" value="ACS19368.1"/>
    <property type="molecule type" value="Genomic_DNA"/>
</dbReference>
<dbReference type="SMR" id="C5CLW1"/>
<dbReference type="STRING" id="543728.Vapar_2746"/>
<dbReference type="KEGG" id="vap:Vapar_2746"/>
<dbReference type="eggNOG" id="COG0779">
    <property type="taxonomic scope" value="Bacteria"/>
</dbReference>
<dbReference type="HOGENOM" id="CLU_070525_1_0_4"/>
<dbReference type="OrthoDB" id="9805006at2"/>
<dbReference type="GO" id="GO:0005829">
    <property type="term" value="C:cytosol"/>
    <property type="evidence" value="ECO:0007669"/>
    <property type="project" value="TreeGrafter"/>
</dbReference>
<dbReference type="GO" id="GO:0000028">
    <property type="term" value="P:ribosomal small subunit assembly"/>
    <property type="evidence" value="ECO:0007669"/>
    <property type="project" value="TreeGrafter"/>
</dbReference>
<dbReference type="GO" id="GO:0006412">
    <property type="term" value="P:translation"/>
    <property type="evidence" value="ECO:0007669"/>
    <property type="project" value="TreeGrafter"/>
</dbReference>
<dbReference type="CDD" id="cd01734">
    <property type="entry name" value="YlxS_C"/>
    <property type="match status" value="1"/>
</dbReference>
<dbReference type="Gene3D" id="3.30.300.70">
    <property type="entry name" value="RimP-like superfamily, N-terminal"/>
    <property type="match status" value="1"/>
</dbReference>
<dbReference type="HAMAP" id="MF_01077">
    <property type="entry name" value="RimP"/>
    <property type="match status" value="1"/>
</dbReference>
<dbReference type="InterPro" id="IPR003728">
    <property type="entry name" value="Ribosome_maturation_RimP"/>
</dbReference>
<dbReference type="InterPro" id="IPR028998">
    <property type="entry name" value="RimP_C"/>
</dbReference>
<dbReference type="InterPro" id="IPR036847">
    <property type="entry name" value="RimP_C_sf"/>
</dbReference>
<dbReference type="InterPro" id="IPR028989">
    <property type="entry name" value="RimP_N"/>
</dbReference>
<dbReference type="InterPro" id="IPR035956">
    <property type="entry name" value="RimP_N_sf"/>
</dbReference>
<dbReference type="NCBIfam" id="NF000929">
    <property type="entry name" value="PRK00092.2-1"/>
    <property type="match status" value="1"/>
</dbReference>
<dbReference type="NCBIfam" id="NF011235">
    <property type="entry name" value="PRK14642.1"/>
    <property type="match status" value="1"/>
</dbReference>
<dbReference type="PANTHER" id="PTHR33867">
    <property type="entry name" value="RIBOSOME MATURATION FACTOR RIMP"/>
    <property type="match status" value="1"/>
</dbReference>
<dbReference type="PANTHER" id="PTHR33867:SF1">
    <property type="entry name" value="RIBOSOME MATURATION FACTOR RIMP"/>
    <property type="match status" value="1"/>
</dbReference>
<dbReference type="Pfam" id="PF02576">
    <property type="entry name" value="RimP_N"/>
    <property type="match status" value="1"/>
</dbReference>
<dbReference type="SUPFAM" id="SSF74942">
    <property type="entry name" value="YhbC-like, C-terminal domain"/>
    <property type="match status" value="1"/>
</dbReference>
<dbReference type="SUPFAM" id="SSF75420">
    <property type="entry name" value="YhbC-like, N-terminal domain"/>
    <property type="match status" value="1"/>
</dbReference>
<proteinExistence type="inferred from homology"/>
<gene>
    <name evidence="1" type="primary">rimP</name>
    <name type="ordered locus">Vapar_2746</name>
</gene>
<accession>C5CLW1</accession>
<sequence length="212" mass="22920">MALQQTVEQTVAGLGYDLVEIERSAGGLLRVTIDLPWTAPTSEAVAAGIPEPFVTVEDCEKVTRQLQFALEVDGVDYKRLEVSSPGIDRPLRNEQDFERFVGEVIDITLKAPMGAAAAGQVSATRKKFRGTLERVAGADGAPGWQIVWSDAPEPKPGQKVSKKRAPAKLHALGFVLDELRDARLAPIVDFKGRKAKTQPGFSDIDDGTNVPD</sequence>
<evidence type="ECO:0000255" key="1">
    <source>
        <dbReference type="HAMAP-Rule" id="MF_01077"/>
    </source>
</evidence>